<gene>
    <name evidence="1" type="primary">cca</name>
    <name type="ordered locus">Bcep18194_A6378</name>
</gene>
<evidence type="ECO:0000255" key="1">
    <source>
        <dbReference type="HAMAP-Rule" id="MF_01261"/>
    </source>
</evidence>
<protein>
    <recommendedName>
        <fullName evidence="1">Multifunctional CCA protein</fullName>
    </recommendedName>
    <domain>
        <recommendedName>
            <fullName evidence="1">CCA-adding enzyme</fullName>
            <ecNumber evidence="1">2.7.7.72</ecNumber>
        </recommendedName>
        <alternativeName>
            <fullName evidence="1">CCA tRNA nucleotidyltransferase</fullName>
        </alternativeName>
        <alternativeName>
            <fullName evidence="1">tRNA CCA-pyrophosphorylase</fullName>
        </alternativeName>
        <alternativeName>
            <fullName evidence="1">tRNA adenylyl-/cytidylyl-transferase</fullName>
        </alternativeName>
        <alternativeName>
            <fullName evidence="1">tRNA nucleotidyltransferase</fullName>
        </alternativeName>
        <alternativeName>
            <fullName evidence="1">tRNA-NT</fullName>
        </alternativeName>
    </domain>
    <domain>
        <recommendedName>
            <fullName evidence="1">2'-nucleotidase</fullName>
            <ecNumber evidence="1">3.1.3.-</ecNumber>
        </recommendedName>
    </domain>
    <domain>
        <recommendedName>
            <fullName evidence="1">2',3'-cyclic phosphodiesterase</fullName>
            <ecNumber evidence="1">3.1.4.-</ecNumber>
        </recommendedName>
    </domain>
    <domain>
        <recommendedName>
            <fullName evidence="1">Phosphatase</fullName>
            <ecNumber evidence="1">3.1.3.-</ecNumber>
        </recommendedName>
    </domain>
</protein>
<sequence length="413" mass="45644">MNIYAVGGAIRDELLGVPVQDRDYVVVGATPEQMAAQGFRPVGKDFPVFLHPRTQEEYALARTERKTAAGYHGFQFHYAPDVTLDEDLARRDLTVNAMAREVSPEGELVGPVIDPFDGQADLRARVFRHVSDAFVEDPVRILRIARFAARFADFTVADETLALMRRMVDAGEVDALVPERVWQEIARGLMEAKPSRMFAVLRECGALARILPEVDALWGVPQRADYHPEVDTGVHVMMVVDYAAKQGYSLPVRFAALTHDLGKATTPADVLPRHVGHEGRSVDLLKPLCERLRVPNECRDLALVVAREHGNLHRVMEMGAAALVRLFERSDALRKPARFAEMLQACESDARGRLGLDAQPYPQAERLRVALAAARSVDAGAIARGIGNDTEKIKEAVHRARIEAVAQALEIGE</sequence>
<reference key="1">
    <citation type="submission" date="2005-10" db="EMBL/GenBank/DDBJ databases">
        <title>Complete sequence of chromosome 1 of Burkholderia sp. 383.</title>
        <authorList>
            <consortium name="US DOE Joint Genome Institute"/>
            <person name="Copeland A."/>
            <person name="Lucas S."/>
            <person name="Lapidus A."/>
            <person name="Barry K."/>
            <person name="Detter J.C."/>
            <person name="Glavina T."/>
            <person name="Hammon N."/>
            <person name="Israni S."/>
            <person name="Pitluck S."/>
            <person name="Chain P."/>
            <person name="Malfatti S."/>
            <person name="Shin M."/>
            <person name="Vergez L."/>
            <person name="Schmutz J."/>
            <person name="Larimer F."/>
            <person name="Land M."/>
            <person name="Kyrpides N."/>
            <person name="Lykidis A."/>
            <person name="Richardson P."/>
        </authorList>
    </citation>
    <scope>NUCLEOTIDE SEQUENCE [LARGE SCALE GENOMIC DNA]</scope>
    <source>
        <strain>ATCC 17760 / DSM 23089 / LMG 22485 / NCIMB 9086 / R18194 / 383</strain>
    </source>
</reference>
<organism>
    <name type="scientific">Burkholderia lata (strain ATCC 17760 / DSM 23089 / LMG 22485 / NCIMB 9086 / R18194 / 383)</name>
    <dbReference type="NCBI Taxonomy" id="482957"/>
    <lineage>
        <taxon>Bacteria</taxon>
        <taxon>Pseudomonadati</taxon>
        <taxon>Pseudomonadota</taxon>
        <taxon>Betaproteobacteria</taxon>
        <taxon>Burkholderiales</taxon>
        <taxon>Burkholderiaceae</taxon>
        <taxon>Burkholderia</taxon>
        <taxon>Burkholderia cepacia complex</taxon>
    </lineage>
</organism>
<dbReference type="EC" id="2.7.7.72" evidence="1"/>
<dbReference type="EC" id="3.1.3.-" evidence="1"/>
<dbReference type="EC" id="3.1.4.-" evidence="1"/>
<dbReference type="EMBL" id="CP000151">
    <property type="protein sequence ID" value="ABB09972.1"/>
    <property type="molecule type" value="Genomic_DNA"/>
</dbReference>
<dbReference type="RefSeq" id="WP_011353478.1">
    <property type="nucleotide sequence ID" value="NC_007510.1"/>
</dbReference>
<dbReference type="SMR" id="Q39C44"/>
<dbReference type="GeneID" id="45096250"/>
<dbReference type="KEGG" id="bur:Bcep18194_A6378"/>
<dbReference type="PATRIC" id="fig|482957.22.peg.3401"/>
<dbReference type="HOGENOM" id="CLU_015961_1_1_4"/>
<dbReference type="Proteomes" id="UP000002705">
    <property type="component" value="Chromosome 1"/>
</dbReference>
<dbReference type="GO" id="GO:0005524">
    <property type="term" value="F:ATP binding"/>
    <property type="evidence" value="ECO:0007669"/>
    <property type="project" value="UniProtKB-UniRule"/>
</dbReference>
<dbReference type="GO" id="GO:0004810">
    <property type="term" value="F:CCA tRNA nucleotidyltransferase activity"/>
    <property type="evidence" value="ECO:0007669"/>
    <property type="project" value="UniProtKB-UniRule"/>
</dbReference>
<dbReference type="GO" id="GO:0004112">
    <property type="term" value="F:cyclic-nucleotide phosphodiesterase activity"/>
    <property type="evidence" value="ECO:0007669"/>
    <property type="project" value="UniProtKB-UniRule"/>
</dbReference>
<dbReference type="GO" id="GO:0000287">
    <property type="term" value="F:magnesium ion binding"/>
    <property type="evidence" value="ECO:0007669"/>
    <property type="project" value="UniProtKB-UniRule"/>
</dbReference>
<dbReference type="GO" id="GO:0016791">
    <property type="term" value="F:phosphatase activity"/>
    <property type="evidence" value="ECO:0007669"/>
    <property type="project" value="UniProtKB-UniRule"/>
</dbReference>
<dbReference type="GO" id="GO:0000049">
    <property type="term" value="F:tRNA binding"/>
    <property type="evidence" value="ECO:0007669"/>
    <property type="project" value="UniProtKB-UniRule"/>
</dbReference>
<dbReference type="GO" id="GO:0042245">
    <property type="term" value="P:RNA repair"/>
    <property type="evidence" value="ECO:0007669"/>
    <property type="project" value="UniProtKB-KW"/>
</dbReference>
<dbReference type="GO" id="GO:0001680">
    <property type="term" value="P:tRNA 3'-terminal CCA addition"/>
    <property type="evidence" value="ECO:0007669"/>
    <property type="project" value="UniProtKB-UniRule"/>
</dbReference>
<dbReference type="CDD" id="cd05398">
    <property type="entry name" value="NT_ClassII-CCAase"/>
    <property type="match status" value="1"/>
</dbReference>
<dbReference type="Gene3D" id="3.30.460.10">
    <property type="entry name" value="Beta Polymerase, domain 2"/>
    <property type="match status" value="1"/>
</dbReference>
<dbReference type="Gene3D" id="1.10.3090.10">
    <property type="entry name" value="cca-adding enzyme, domain 2"/>
    <property type="match status" value="1"/>
</dbReference>
<dbReference type="HAMAP" id="MF_01261">
    <property type="entry name" value="CCA_bact_type1"/>
    <property type="match status" value="1"/>
</dbReference>
<dbReference type="HAMAP" id="MF_01262">
    <property type="entry name" value="CCA_bact_type2"/>
    <property type="match status" value="1"/>
</dbReference>
<dbReference type="InterPro" id="IPR012006">
    <property type="entry name" value="CCA_bact"/>
</dbReference>
<dbReference type="InterPro" id="IPR006674">
    <property type="entry name" value="HD_domain"/>
</dbReference>
<dbReference type="InterPro" id="IPR043519">
    <property type="entry name" value="NT_sf"/>
</dbReference>
<dbReference type="InterPro" id="IPR002646">
    <property type="entry name" value="PolA_pol_head_dom"/>
</dbReference>
<dbReference type="InterPro" id="IPR032828">
    <property type="entry name" value="PolyA_RNA-bd"/>
</dbReference>
<dbReference type="InterPro" id="IPR050124">
    <property type="entry name" value="tRNA_CCA-adding_enzyme"/>
</dbReference>
<dbReference type="NCBIfam" id="NF008137">
    <property type="entry name" value="PRK10885.1"/>
    <property type="match status" value="1"/>
</dbReference>
<dbReference type="PANTHER" id="PTHR47545">
    <property type="entry name" value="MULTIFUNCTIONAL CCA PROTEIN"/>
    <property type="match status" value="1"/>
</dbReference>
<dbReference type="PANTHER" id="PTHR47545:SF1">
    <property type="entry name" value="MULTIFUNCTIONAL CCA PROTEIN"/>
    <property type="match status" value="1"/>
</dbReference>
<dbReference type="Pfam" id="PF01966">
    <property type="entry name" value="HD"/>
    <property type="match status" value="1"/>
</dbReference>
<dbReference type="Pfam" id="PF01743">
    <property type="entry name" value="PolyA_pol"/>
    <property type="match status" value="1"/>
</dbReference>
<dbReference type="Pfam" id="PF12627">
    <property type="entry name" value="PolyA_pol_RNAbd"/>
    <property type="match status" value="1"/>
</dbReference>
<dbReference type="PIRSF" id="PIRSF000813">
    <property type="entry name" value="CCA_bact"/>
    <property type="match status" value="1"/>
</dbReference>
<dbReference type="SUPFAM" id="SSF81301">
    <property type="entry name" value="Nucleotidyltransferase"/>
    <property type="match status" value="1"/>
</dbReference>
<dbReference type="SUPFAM" id="SSF81891">
    <property type="entry name" value="Poly A polymerase C-terminal region-like"/>
    <property type="match status" value="1"/>
</dbReference>
<dbReference type="PROSITE" id="PS51831">
    <property type="entry name" value="HD"/>
    <property type="match status" value="1"/>
</dbReference>
<proteinExistence type="inferred from homology"/>
<comment type="function">
    <text evidence="1">Catalyzes the addition and repair of the essential 3'-terminal CCA sequence in tRNAs without using a nucleic acid template. Adds these three nucleotides in the order of C, C, and A to the tRNA nucleotide-73, using CTP and ATP as substrates and producing inorganic pyrophosphate. tRNA 3'-terminal CCA addition is required both for tRNA processing and repair. Also involved in tRNA surveillance by mediating tandem CCA addition to generate a CCACCA at the 3' terminus of unstable tRNAs. While stable tRNAs receive only 3'-terminal CCA, unstable tRNAs are marked with CCACCA and rapidly degraded.</text>
</comment>
<comment type="catalytic activity">
    <reaction evidence="1">
        <text>a tRNA precursor + 2 CTP + ATP = a tRNA with a 3' CCA end + 3 diphosphate</text>
        <dbReference type="Rhea" id="RHEA:14433"/>
        <dbReference type="Rhea" id="RHEA-COMP:10465"/>
        <dbReference type="Rhea" id="RHEA-COMP:10468"/>
        <dbReference type="ChEBI" id="CHEBI:30616"/>
        <dbReference type="ChEBI" id="CHEBI:33019"/>
        <dbReference type="ChEBI" id="CHEBI:37563"/>
        <dbReference type="ChEBI" id="CHEBI:74896"/>
        <dbReference type="ChEBI" id="CHEBI:83071"/>
        <dbReference type="EC" id="2.7.7.72"/>
    </reaction>
</comment>
<comment type="catalytic activity">
    <reaction evidence="1">
        <text>a tRNA with a 3' CCA end + 2 CTP + ATP = a tRNA with a 3' CCACCA end + 3 diphosphate</text>
        <dbReference type="Rhea" id="RHEA:76235"/>
        <dbReference type="Rhea" id="RHEA-COMP:10468"/>
        <dbReference type="Rhea" id="RHEA-COMP:18655"/>
        <dbReference type="ChEBI" id="CHEBI:30616"/>
        <dbReference type="ChEBI" id="CHEBI:33019"/>
        <dbReference type="ChEBI" id="CHEBI:37563"/>
        <dbReference type="ChEBI" id="CHEBI:83071"/>
        <dbReference type="ChEBI" id="CHEBI:195187"/>
    </reaction>
    <physiologicalReaction direction="left-to-right" evidence="1">
        <dbReference type="Rhea" id="RHEA:76236"/>
    </physiologicalReaction>
</comment>
<comment type="cofactor">
    <cofactor evidence="1">
        <name>Mg(2+)</name>
        <dbReference type="ChEBI" id="CHEBI:18420"/>
    </cofactor>
    <text evidence="1">Magnesium is required for nucleotidyltransferase activity.</text>
</comment>
<comment type="cofactor">
    <cofactor evidence="1">
        <name>Ni(2+)</name>
        <dbReference type="ChEBI" id="CHEBI:49786"/>
    </cofactor>
    <text evidence="1">Nickel for phosphatase activity.</text>
</comment>
<comment type="subunit">
    <text evidence="1">Monomer. Can also form homodimers and oligomers.</text>
</comment>
<comment type="domain">
    <text evidence="1">Comprises two domains: an N-terminal domain containing the nucleotidyltransferase activity and a C-terminal HD domain associated with both phosphodiesterase and phosphatase activities.</text>
</comment>
<comment type="miscellaneous">
    <text evidence="1">A single active site specifically recognizes both ATP and CTP and is responsible for their addition.</text>
</comment>
<comment type="similarity">
    <text evidence="1">Belongs to the tRNA nucleotidyltransferase/poly(A) polymerase family. Bacterial CCA-adding enzyme type 1 subfamily.</text>
</comment>
<name>CCA_BURL3</name>
<accession>Q39C44</accession>
<keyword id="KW-0067">ATP-binding</keyword>
<keyword id="KW-0378">Hydrolase</keyword>
<keyword id="KW-0460">Magnesium</keyword>
<keyword id="KW-0479">Metal-binding</keyword>
<keyword id="KW-0511">Multifunctional enzyme</keyword>
<keyword id="KW-0533">Nickel</keyword>
<keyword id="KW-0547">Nucleotide-binding</keyword>
<keyword id="KW-0548">Nucleotidyltransferase</keyword>
<keyword id="KW-0692">RNA repair</keyword>
<keyword id="KW-0694">RNA-binding</keyword>
<keyword id="KW-0808">Transferase</keyword>
<keyword id="KW-0819">tRNA processing</keyword>
<feature type="chain" id="PRO_1000054258" description="Multifunctional CCA protein">
    <location>
        <begin position="1"/>
        <end position="413"/>
    </location>
</feature>
<feature type="domain" description="HD" evidence="1">
    <location>
        <begin position="232"/>
        <end position="333"/>
    </location>
</feature>
<feature type="binding site" evidence="1">
    <location>
        <position position="8"/>
    </location>
    <ligand>
        <name>ATP</name>
        <dbReference type="ChEBI" id="CHEBI:30616"/>
    </ligand>
</feature>
<feature type="binding site" evidence="1">
    <location>
        <position position="8"/>
    </location>
    <ligand>
        <name>CTP</name>
        <dbReference type="ChEBI" id="CHEBI:37563"/>
    </ligand>
</feature>
<feature type="binding site" evidence="1">
    <location>
        <position position="11"/>
    </location>
    <ligand>
        <name>ATP</name>
        <dbReference type="ChEBI" id="CHEBI:30616"/>
    </ligand>
</feature>
<feature type="binding site" evidence="1">
    <location>
        <position position="11"/>
    </location>
    <ligand>
        <name>CTP</name>
        <dbReference type="ChEBI" id="CHEBI:37563"/>
    </ligand>
</feature>
<feature type="binding site" evidence="1">
    <location>
        <position position="21"/>
    </location>
    <ligand>
        <name>Mg(2+)</name>
        <dbReference type="ChEBI" id="CHEBI:18420"/>
    </ligand>
</feature>
<feature type="binding site" evidence="1">
    <location>
        <position position="23"/>
    </location>
    <ligand>
        <name>Mg(2+)</name>
        <dbReference type="ChEBI" id="CHEBI:18420"/>
    </ligand>
</feature>
<feature type="binding site" evidence="1">
    <location>
        <position position="91"/>
    </location>
    <ligand>
        <name>ATP</name>
        <dbReference type="ChEBI" id="CHEBI:30616"/>
    </ligand>
</feature>
<feature type="binding site" evidence="1">
    <location>
        <position position="91"/>
    </location>
    <ligand>
        <name>CTP</name>
        <dbReference type="ChEBI" id="CHEBI:37563"/>
    </ligand>
</feature>
<feature type="binding site" evidence="1">
    <location>
        <position position="143"/>
    </location>
    <ligand>
        <name>ATP</name>
        <dbReference type="ChEBI" id="CHEBI:30616"/>
    </ligand>
</feature>
<feature type="binding site" evidence="1">
    <location>
        <position position="143"/>
    </location>
    <ligand>
        <name>CTP</name>
        <dbReference type="ChEBI" id="CHEBI:37563"/>
    </ligand>
</feature>
<feature type="binding site" evidence="1">
    <location>
        <position position="146"/>
    </location>
    <ligand>
        <name>ATP</name>
        <dbReference type="ChEBI" id="CHEBI:30616"/>
    </ligand>
</feature>
<feature type="binding site" evidence="1">
    <location>
        <position position="146"/>
    </location>
    <ligand>
        <name>CTP</name>
        <dbReference type="ChEBI" id="CHEBI:37563"/>
    </ligand>
</feature>